<feature type="chain" id="PRO_1000204262" description="Shikimate dehydrogenase (NADP(+))">
    <location>
        <begin position="1"/>
        <end position="271"/>
    </location>
</feature>
<feature type="active site" description="Proton acceptor" evidence="1">
    <location>
        <position position="65"/>
    </location>
</feature>
<feature type="binding site" evidence="1">
    <location>
        <begin position="14"/>
        <end position="16"/>
    </location>
    <ligand>
        <name>shikimate</name>
        <dbReference type="ChEBI" id="CHEBI:36208"/>
    </ligand>
</feature>
<feature type="binding site" evidence="1">
    <location>
        <position position="61"/>
    </location>
    <ligand>
        <name>shikimate</name>
        <dbReference type="ChEBI" id="CHEBI:36208"/>
    </ligand>
</feature>
<feature type="binding site" evidence="1">
    <location>
        <position position="86"/>
    </location>
    <ligand>
        <name>shikimate</name>
        <dbReference type="ChEBI" id="CHEBI:36208"/>
    </ligand>
</feature>
<feature type="binding site" evidence="1">
    <location>
        <position position="101"/>
    </location>
    <ligand>
        <name>shikimate</name>
        <dbReference type="ChEBI" id="CHEBI:36208"/>
    </ligand>
</feature>
<feature type="binding site" evidence="1">
    <location>
        <begin position="125"/>
        <end position="129"/>
    </location>
    <ligand>
        <name>NADP(+)</name>
        <dbReference type="ChEBI" id="CHEBI:58349"/>
    </ligand>
</feature>
<feature type="binding site" evidence="1">
    <location>
        <begin position="148"/>
        <end position="153"/>
    </location>
    <ligand>
        <name>NADP(+)</name>
        <dbReference type="ChEBI" id="CHEBI:58349"/>
    </ligand>
</feature>
<feature type="binding site" evidence="1">
    <location>
        <position position="212"/>
    </location>
    <ligand>
        <name>NADP(+)</name>
        <dbReference type="ChEBI" id="CHEBI:58349"/>
    </ligand>
</feature>
<feature type="binding site" evidence="1">
    <location>
        <position position="214"/>
    </location>
    <ligand>
        <name>shikimate</name>
        <dbReference type="ChEBI" id="CHEBI:36208"/>
    </ligand>
</feature>
<feature type="binding site" evidence="1">
    <location>
        <position position="236"/>
    </location>
    <ligand>
        <name>NADP(+)</name>
        <dbReference type="ChEBI" id="CHEBI:58349"/>
    </ligand>
</feature>
<organism>
    <name type="scientific">Edwardsiella ictaluri (strain 93-146)</name>
    <dbReference type="NCBI Taxonomy" id="634503"/>
    <lineage>
        <taxon>Bacteria</taxon>
        <taxon>Pseudomonadati</taxon>
        <taxon>Pseudomonadota</taxon>
        <taxon>Gammaproteobacteria</taxon>
        <taxon>Enterobacterales</taxon>
        <taxon>Hafniaceae</taxon>
        <taxon>Edwardsiella</taxon>
    </lineage>
</organism>
<protein>
    <recommendedName>
        <fullName evidence="1">Shikimate dehydrogenase (NADP(+))</fullName>
        <shortName evidence="1">SDH</shortName>
        <ecNumber evidence="1">1.1.1.25</ecNumber>
    </recommendedName>
</protein>
<name>AROE_EDWI9</name>
<reference key="1">
    <citation type="submission" date="2009-03" db="EMBL/GenBank/DDBJ databases">
        <title>Complete genome sequence of Edwardsiella ictaluri 93-146.</title>
        <authorList>
            <person name="Williams M.L."/>
            <person name="Gillaspy A.F."/>
            <person name="Dyer D.W."/>
            <person name="Thune R.L."/>
            <person name="Waldbieser G.C."/>
            <person name="Schuster S.C."/>
            <person name="Gipson J."/>
            <person name="Zaitshik J."/>
            <person name="Landry C."/>
            <person name="Lawrence M.L."/>
        </authorList>
    </citation>
    <scope>NUCLEOTIDE SEQUENCE [LARGE SCALE GENOMIC DNA]</scope>
    <source>
        <strain>93-146</strain>
    </source>
</reference>
<evidence type="ECO:0000255" key="1">
    <source>
        <dbReference type="HAMAP-Rule" id="MF_00222"/>
    </source>
</evidence>
<accession>C5BF12</accession>
<dbReference type="EC" id="1.1.1.25" evidence="1"/>
<dbReference type="EMBL" id="CP001600">
    <property type="protein sequence ID" value="ACR70684.1"/>
    <property type="molecule type" value="Genomic_DNA"/>
</dbReference>
<dbReference type="RefSeq" id="WP_015872750.1">
    <property type="nucleotide sequence ID" value="NZ_CP169062.1"/>
</dbReference>
<dbReference type="SMR" id="C5BF12"/>
<dbReference type="STRING" id="67780.B6E78_09375"/>
<dbReference type="GeneID" id="69540398"/>
<dbReference type="KEGG" id="eic:NT01EI_3555"/>
<dbReference type="PATRIC" id="fig|634503.3.peg.3161"/>
<dbReference type="HOGENOM" id="CLU_044063_2_1_6"/>
<dbReference type="OrthoDB" id="9776868at2"/>
<dbReference type="UniPathway" id="UPA00053">
    <property type="reaction ID" value="UER00087"/>
</dbReference>
<dbReference type="Proteomes" id="UP000001485">
    <property type="component" value="Chromosome"/>
</dbReference>
<dbReference type="GO" id="GO:0005829">
    <property type="term" value="C:cytosol"/>
    <property type="evidence" value="ECO:0007669"/>
    <property type="project" value="TreeGrafter"/>
</dbReference>
<dbReference type="GO" id="GO:0050661">
    <property type="term" value="F:NADP binding"/>
    <property type="evidence" value="ECO:0007669"/>
    <property type="project" value="InterPro"/>
</dbReference>
<dbReference type="GO" id="GO:0004764">
    <property type="term" value="F:shikimate 3-dehydrogenase (NADP+) activity"/>
    <property type="evidence" value="ECO:0007669"/>
    <property type="project" value="UniProtKB-UniRule"/>
</dbReference>
<dbReference type="GO" id="GO:0008652">
    <property type="term" value="P:amino acid biosynthetic process"/>
    <property type="evidence" value="ECO:0007669"/>
    <property type="project" value="UniProtKB-KW"/>
</dbReference>
<dbReference type="GO" id="GO:0009073">
    <property type="term" value="P:aromatic amino acid family biosynthetic process"/>
    <property type="evidence" value="ECO:0007669"/>
    <property type="project" value="UniProtKB-KW"/>
</dbReference>
<dbReference type="GO" id="GO:0009423">
    <property type="term" value="P:chorismate biosynthetic process"/>
    <property type="evidence" value="ECO:0007669"/>
    <property type="project" value="UniProtKB-UniRule"/>
</dbReference>
<dbReference type="GO" id="GO:0019632">
    <property type="term" value="P:shikimate metabolic process"/>
    <property type="evidence" value="ECO:0007669"/>
    <property type="project" value="InterPro"/>
</dbReference>
<dbReference type="CDD" id="cd01065">
    <property type="entry name" value="NAD_bind_Shikimate_DH"/>
    <property type="match status" value="1"/>
</dbReference>
<dbReference type="FunFam" id="3.40.50.10860:FF:000006">
    <property type="entry name" value="Shikimate dehydrogenase (NADP(+))"/>
    <property type="match status" value="1"/>
</dbReference>
<dbReference type="FunFam" id="3.40.50.720:FF:000104">
    <property type="entry name" value="Shikimate dehydrogenase (NADP(+))"/>
    <property type="match status" value="1"/>
</dbReference>
<dbReference type="Gene3D" id="3.40.50.10860">
    <property type="entry name" value="Leucine Dehydrogenase, chain A, domain 1"/>
    <property type="match status" value="1"/>
</dbReference>
<dbReference type="Gene3D" id="3.40.50.720">
    <property type="entry name" value="NAD(P)-binding Rossmann-like Domain"/>
    <property type="match status" value="1"/>
</dbReference>
<dbReference type="HAMAP" id="MF_00222">
    <property type="entry name" value="Shikimate_DH_AroE"/>
    <property type="match status" value="1"/>
</dbReference>
<dbReference type="InterPro" id="IPR046346">
    <property type="entry name" value="Aminoacid_DH-like_N_sf"/>
</dbReference>
<dbReference type="InterPro" id="IPR036291">
    <property type="entry name" value="NAD(P)-bd_dom_sf"/>
</dbReference>
<dbReference type="InterPro" id="IPR041121">
    <property type="entry name" value="SDH_C"/>
</dbReference>
<dbReference type="InterPro" id="IPR011342">
    <property type="entry name" value="Shikimate_DH"/>
</dbReference>
<dbReference type="InterPro" id="IPR013708">
    <property type="entry name" value="Shikimate_DH-bd_N"/>
</dbReference>
<dbReference type="InterPro" id="IPR022893">
    <property type="entry name" value="Shikimate_DH_fam"/>
</dbReference>
<dbReference type="InterPro" id="IPR006151">
    <property type="entry name" value="Shikm_DH/Glu-tRNA_Rdtase"/>
</dbReference>
<dbReference type="NCBIfam" id="TIGR00507">
    <property type="entry name" value="aroE"/>
    <property type="match status" value="1"/>
</dbReference>
<dbReference type="NCBIfam" id="NF001310">
    <property type="entry name" value="PRK00258.1-2"/>
    <property type="match status" value="1"/>
</dbReference>
<dbReference type="PANTHER" id="PTHR21089:SF1">
    <property type="entry name" value="BIFUNCTIONAL 3-DEHYDROQUINATE DEHYDRATASE_SHIKIMATE DEHYDROGENASE, CHLOROPLASTIC"/>
    <property type="match status" value="1"/>
</dbReference>
<dbReference type="PANTHER" id="PTHR21089">
    <property type="entry name" value="SHIKIMATE DEHYDROGENASE"/>
    <property type="match status" value="1"/>
</dbReference>
<dbReference type="Pfam" id="PF18317">
    <property type="entry name" value="SDH_C"/>
    <property type="match status" value="1"/>
</dbReference>
<dbReference type="Pfam" id="PF01488">
    <property type="entry name" value="Shikimate_DH"/>
    <property type="match status" value="1"/>
</dbReference>
<dbReference type="Pfam" id="PF08501">
    <property type="entry name" value="Shikimate_dh_N"/>
    <property type="match status" value="1"/>
</dbReference>
<dbReference type="SUPFAM" id="SSF53223">
    <property type="entry name" value="Aminoacid dehydrogenase-like, N-terminal domain"/>
    <property type="match status" value="1"/>
</dbReference>
<dbReference type="SUPFAM" id="SSF51735">
    <property type="entry name" value="NAD(P)-binding Rossmann-fold domains"/>
    <property type="match status" value="1"/>
</dbReference>
<keyword id="KW-0028">Amino-acid biosynthesis</keyword>
<keyword id="KW-0057">Aromatic amino acid biosynthesis</keyword>
<keyword id="KW-0521">NADP</keyword>
<keyword id="KW-0560">Oxidoreductase</keyword>
<gene>
    <name evidence="1" type="primary">aroE</name>
    <name type="ordered locus">NT01EI_3555</name>
</gene>
<sequence length="271" mass="29122">MQQFAVFGHPIKHSQSPRIHRLFAQQTGIALSYEAMLAPLDDFPAFAMAFFQQGGRGANVTTPFKEQAWQMADVLTPRARLAGAVNTLHWQNARLLGDNTDGVGLVSDLHRLAMIGDASRVLLLGAGGAARGVILPLLEQGCRIALANRTHARAQALAAAFQAQGAIEALPYDALGTHTFDLIINATASGLQGELPPLPRSIIRPDCACYDMFYRAGATPFLAWVQQQGAVRLADGFGMLVAQAAHAFSLWHGIMPQIAPVLIQLRQEPVG</sequence>
<proteinExistence type="inferred from homology"/>
<comment type="function">
    <text evidence="1">Involved in the biosynthesis of the chorismate, which leads to the biosynthesis of aromatic amino acids. Catalyzes the reversible NADPH linked reduction of 3-dehydroshikimate (DHSA) to yield shikimate (SA).</text>
</comment>
<comment type="catalytic activity">
    <reaction evidence="1">
        <text>shikimate + NADP(+) = 3-dehydroshikimate + NADPH + H(+)</text>
        <dbReference type="Rhea" id="RHEA:17737"/>
        <dbReference type="ChEBI" id="CHEBI:15378"/>
        <dbReference type="ChEBI" id="CHEBI:16630"/>
        <dbReference type="ChEBI" id="CHEBI:36208"/>
        <dbReference type="ChEBI" id="CHEBI:57783"/>
        <dbReference type="ChEBI" id="CHEBI:58349"/>
        <dbReference type="EC" id="1.1.1.25"/>
    </reaction>
</comment>
<comment type="pathway">
    <text evidence="1">Metabolic intermediate biosynthesis; chorismate biosynthesis; chorismate from D-erythrose 4-phosphate and phosphoenolpyruvate: step 4/7.</text>
</comment>
<comment type="subunit">
    <text evidence="1">Homodimer.</text>
</comment>
<comment type="similarity">
    <text evidence="1">Belongs to the shikimate dehydrogenase family.</text>
</comment>